<name>RL1_GEOUR</name>
<dbReference type="EMBL" id="CP000698">
    <property type="protein sequence ID" value="ABQ25264.1"/>
    <property type="molecule type" value="Genomic_DNA"/>
</dbReference>
<dbReference type="RefSeq" id="WP_011937988.1">
    <property type="nucleotide sequence ID" value="NC_009483.1"/>
</dbReference>
<dbReference type="SMR" id="A5GAX8"/>
<dbReference type="STRING" id="351605.Gura_1058"/>
<dbReference type="KEGG" id="gur:Gura_1058"/>
<dbReference type="HOGENOM" id="CLU_062853_0_0_7"/>
<dbReference type="OrthoDB" id="9803740at2"/>
<dbReference type="Proteomes" id="UP000006695">
    <property type="component" value="Chromosome"/>
</dbReference>
<dbReference type="GO" id="GO:0022625">
    <property type="term" value="C:cytosolic large ribosomal subunit"/>
    <property type="evidence" value="ECO:0007669"/>
    <property type="project" value="TreeGrafter"/>
</dbReference>
<dbReference type="GO" id="GO:0019843">
    <property type="term" value="F:rRNA binding"/>
    <property type="evidence" value="ECO:0007669"/>
    <property type="project" value="UniProtKB-UniRule"/>
</dbReference>
<dbReference type="GO" id="GO:0003735">
    <property type="term" value="F:structural constituent of ribosome"/>
    <property type="evidence" value="ECO:0007669"/>
    <property type="project" value="InterPro"/>
</dbReference>
<dbReference type="GO" id="GO:0000049">
    <property type="term" value="F:tRNA binding"/>
    <property type="evidence" value="ECO:0007669"/>
    <property type="project" value="UniProtKB-KW"/>
</dbReference>
<dbReference type="GO" id="GO:0006417">
    <property type="term" value="P:regulation of translation"/>
    <property type="evidence" value="ECO:0007669"/>
    <property type="project" value="UniProtKB-KW"/>
</dbReference>
<dbReference type="GO" id="GO:0006412">
    <property type="term" value="P:translation"/>
    <property type="evidence" value="ECO:0007669"/>
    <property type="project" value="UniProtKB-UniRule"/>
</dbReference>
<dbReference type="CDD" id="cd00403">
    <property type="entry name" value="Ribosomal_L1"/>
    <property type="match status" value="1"/>
</dbReference>
<dbReference type="FunFam" id="3.40.50.790:FF:000001">
    <property type="entry name" value="50S ribosomal protein L1"/>
    <property type="match status" value="1"/>
</dbReference>
<dbReference type="Gene3D" id="3.30.190.20">
    <property type="match status" value="1"/>
</dbReference>
<dbReference type="Gene3D" id="3.40.50.790">
    <property type="match status" value="1"/>
</dbReference>
<dbReference type="HAMAP" id="MF_01318_B">
    <property type="entry name" value="Ribosomal_uL1_B"/>
    <property type="match status" value="1"/>
</dbReference>
<dbReference type="InterPro" id="IPR005878">
    <property type="entry name" value="Ribosom_uL1_bac-type"/>
</dbReference>
<dbReference type="InterPro" id="IPR002143">
    <property type="entry name" value="Ribosomal_uL1"/>
</dbReference>
<dbReference type="InterPro" id="IPR023674">
    <property type="entry name" value="Ribosomal_uL1-like"/>
</dbReference>
<dbReference type="InterPro" id="IPR028364">
    <property type="entry name" value="Ribosomal_uL1/biogenesis"/>
</dbReference>
<dbReference type="InterPro" id="IPR016095">
    <property type="entry name" value="Ribosomal_uL1_3-a/b-sand"/>
</dbReference>
<dbReference type="InterPro" id="IPR023673">
    <property type="entry name" value="Ribosomal_uL1_CS"/>
</dbReference>
<dbReference type="NCBIfam" id="TIGR01169">
    <property type="entry name" value="rplA_bact"/>
    <property type="match status" value="1"/>
</dbReference>
<dbReference type="PANTHER" id="PTHR36427">
    <property type="entry name" value="54S RIBOSOMAL PROTEIN L1, MITOCHONDRIAL"/>
    <property type="match status" value="1"/>
</dbReference>
<dbReference type="PANTHER" id="PTHR36427:SF3">
    <property type="entry name" value="LARGE RIBOSOMAL SUBUNIT PROTEIN UL1M"/>
    <property type="match status" value="1"/>
</dbReference>
<dbReference type="Pfam" id="PF00687">
    <property type="entry name" value="Ribosomal_L1"/>
    <property type="match status" value="1"/>
</dbReference>
<dbReference type="PIRSF" id="PIRSF002155">
    <property type="entry name" value="Ribosomal_L1"/>
    <property type="match status" value="1"/>
</dbReference>
<dbReference type="SUPFAM" id="SSF56808">
    <property type="entry name" value="Ribosomal protein L1"/>
    <property type="match status" value="1"/>
</dbReference>
<dbReference type="PROSITE" id="PS01199">
    <property type="entry name" value="RIBOSOMAL_L1"/>
    <property type="match status" value="1"/>
</dbReference>
<organism>
    <name type="scientific">Geotalea uraniireducens (strain Rf4)</name>
    <name type="common">Geobacter uraniireducens</name>
    <dbReference type="NCBI Taxonomy" id="351605"/>
    <lineage>
        <taxon>Bacteria</taxon>
        <taxon>Pseudomonadati</taxon>
        <taxon>Thermodesulfobacteriota</taxon>
        <taxon>Desulfuromonadia</taxon>
        <taxon>Geobacterales</taxon>
        <taxon>Geobacteraceae</taxon>
        <taxon>Geotalea</taxon>
    </lineage>
</organism>
<reference key="1">
    <citation type="submission" date="2007-05" db="EMBL/GenBank/DDBJ databases">
        <title>Complete sequence of Geobacter uraniireducens Rf4.</title>
        <authorList>
            <consortium name="US DOE Joint Genome Institute"/>
            <person name="Copeland A."/>
            <person name="Lucas S."/>
            <person name="Lapidus A."/>
            <person name="Barry K."/>
            <person name="Detter J.C."/>
            <person name="Glavina del Rio T."/>
            <person name="Hammon N."/>
            <person name="Israni S."/>
            <person name="Dalin E."/>
            <person name="Tice H."/>
            <person name="Pitluck S."/>
            <person name="Chertkov O."/>
            <person name="Brettin T."/>
            <person name="Bruce D."/>
            <person name="Han C."/>
            <person name="Schmutz J."/>
            <person name="Larimer F."/>
            <person name="Land M."/>
            <person name="Hauser L."/>
            <person name="Kyrpides N."/>
            <person name="Mikhailova N."/>
            <person name="Shelobolina E."/>
            <person name="Aklujkar M."/>
            <person name="Lovley D."/>
            <person name="Richardson P."/>
        </authorList>
    </citation>
    <scope>NUCLEOTIDE SEQUENCE [LARGE SCALE GENOMIC DNA]</scope>
    <source>
        <strain>ATCC BAA-1134 / JCM 13001 / Rf4</strain>
    </source>
</reference>
<sequence length="233" mass="24766">MPTSKKLKEALAKVDRSKSYTLKDGIELVKNTAFAKFTETVDVAVRLGVDPRHADQMVRGAVVLPNGLGKDVRVLVFAKGEKEKEARDAGADFVGADDLVAKIQEGWFDFDTAIATPDMMGVVGKIGKLLGPRGLMPNPKVGTVTFDVGRAVNESKSGKVEFRVEKAGIIHAPVGKVSFDADKLKENILALVDALVKSKPSAAKGTYIKKISVSSTMGPGVNLDVSDVSSQVV</sequence>
<keyword id="KW-1185">Reference proteome</keyword>
<keyword id="KW-0678">Repressor</keyword>
<keyword id="KW-0687">Ribonucleoprotein</keyword>
<keyword id="KW-0689">Ribosomal protein</keyword>
<keyword id="KW-0694">RNA-binding</keyword>
<keyword id="KW-0699">rRNA-binding</keyword>
<keyword id="KW-0810">Translation regulation</keyword>
<keyword id="KW-0820">tRNA-binding</keyword>
<proteinExistence type="inferred from homology"/>
<evidence type="ECO:0000255" key="1">
    <source>
        <dbReference type="HAMAP-Rule" id="MF_01318"/>
    </source>
</evidence>
<evidence type="ECO:0000305" key="2"/>
<accession>A5GAX8</accession>
<protein>
    <recommendedName>
        <fullName evidence="1">Large ribosomal subunit protein uL1</fullName>
    </recommendedName>
    <alternativeName>
        <fullName evidence="2">50S ribosomal protein L1</fullName>
    </alternativeName>
</protein>
<feature type="chain" id="PRO_1000086287" description="Large ribosomal subunit protein uL1">
    <location>
        <begin position="1"/>
        <end position="233"/>
    </location>
</feature>
<comment type="function">
    <text evidence="1">Binds directly to 23S rRNA. The L1 stalk is quite mobile in the ribosome, and is involved in E site tRNA release.</text>
</comment>
<comment type="function">
    <text evidence="1">Protein L1 is also a translational repressor protein, it controls the translation of the L11 operon by binding to its mRNA.</text>
</comment>
<comment type="subunit">
    <text evidence="1">Part of the 50S ribosomal subunit.</text>
</comment>
<comment type="similarity">
    <text evidence="1">Belongs to the universal ribosomal protein uL1 family.</text>
</comment>
<gene>
    <name evidence="1" type="primary">rplA</name>
    <name type="ordered locus">Gura_1058</name>
</gene>